<gene>
    <name evidence="1" type="primary">atpF1</name>
    <name type="ordered locus">BARBAKC583_0379</name>
</gene>
<name>ATPF1_BARBK</name>
<organism>
    <name type="scientific">Bartonella bacilliformis (strain ATCC 35685 / KC583 / Herrer 020/F12,63)</name>
    <dbReference type="NCBI Taxonomy" id="360095"/>
    <lineage>
        <taxon>Bacteria</taxon>
        <taxon>Pseudomonadati</taxon>
        <taxon>Pseudomonadota</taxon>
        <taxon>Alphaproteobacteria</taxon>
        <taxon>Hyphomicrobiales</taxon>
        <taxon>Bartonellaceae</taxon>
        <taxon>Bartonella</taxon>
    </lineage>
</organism>
<feature type="chain" id="PRO_0000368341" description="ATP synthase subunit b 1">
    <location>
        <begin position="1"/>
        <end position="159"/>
    </location>
</feature>
<feature type="transmembrane region" description="Helical" evidence="1">
    <location>
        <begin position="5"/>
        <end position="25"/>
    </location>
</feature>
<proteinExistence type="inferred from homology"/>
<sequence>MTDTFWAFIGLILFLALLFYFKVPAMALRSLDERAKRIAGELDEALRLREEAQGILAEYQQKCAGIEQDVQEIITAAKHEAEIIVAEARVKTEEYVKNRNKLVEQKIAQAESDAIQEISSSAVNLAISSASKIINNELGAKKANDLIKESIIKVKTNLH</sequence>
<comment type="function">
    <text evidence="1">F(1)F(0) ATP synthase produces ATP from ADP in the presence of a proton or sodium gradient. F-type ATPases consist of two structural domains, F(1) containing the extramembraneous catalytic core and F(0) containing the membrane proton channel, linked together by a central stalk and a peripheral stalk. During catalysis, ATP synthesis in the catalytic domain of F(1) is coupled via a rotary mechanism of the central stalk subunits to proton translocation.</text>
</comment>
<comment type="function">
    <text evidence="1">Component of the F(0) channel, it forms part of the peripheral stalk, linking F(1) to F(0).</text>
</comment>
<comment type="subunit">
    <text evidence="1">F-type ATPases have 2 components, F(1) - the catalytic core - and F(0) - the membrane proton channel. F(1) has five subunits: alpha(3), beta(3), gamma(1), delta(1), epsilon(1). F(0) has three main subunits: a(1), b(2) and c(10-14). The alpha and beta chains form an alternating ring which encloses part of the gamma chain. F(1) is attached to F(0) by a central stalk formed by the gamma and epsilon chains, while a peripheral stalk is formed by the delta and b chains.</text>
</comment>
<comment type="subcellular location">
    <subcellularLocation>
        <location evidence="1">Cell inner membrane</location>
        <topology evidence="1">Single-pass membrane protein</topology>
    </subcellularLocation>
</comment>
<comment type="similarity">
    <text evidence="1">Belongs to the ATPase B chain family.</text>
</comment>
<dbReference type="EMBL" id="CP000524">
    <property type="protein sequence ID" value="ABM44850.1"/>
    <property type="molecule type" value="Genomic_DNA"/>
</dbReference>
<dbReference type="RefSeq" id="WP_005766369.1">
    <property type="nucleotide sequence ID" value="NC_008783.1"/>
</dbReference>
<dbReference type="SMR" id="A1URU5"/>
<dbReference type="STRING" id="360095.BARBAKC583_0379"/>
<dbReference type="GeneID" id="4684601"/>
<dbReference type="KEGG" id="bbk:BARBAKC583_0379"/>
<dbReference type="PATRIC" id="fig|360095.6.peg.362"/>
<dbReference type="eggNOG" id="COG0711">
    <property type="taxonomic scope" value="Bacteria"/>
</dbReference>
<dbReference type="HOGENOM" id="CLU_079215_6_1_5"/>
<dbReference type="OrthoDB" id="8479836at2"/>
<dbReference type="Proteomes" id="UP000000643">
    <property type="component" value="Chromosome"/>
</dbReference>
<dbReference type="GO" id="GO:0005886">
    <property type="term" value="C:plasma membrane"/>
    <property type="evidence" value="ECO:0007669"/>
    <property type="project" value="UniProtKB-SubCell"/>
</dbReference>
<dbReference type="GO" id="GO:0045259">
    <property type="term" value="C:proton-transporting ATP synthase complex"/>
    <property type="evidence" value="ECO:0007669"/>
    <property type="project" value="UniProtKB-KW"/>
</dbReference>
<dbReference type="GO" id="GO:0046933">
    <property type="term" value="F:proton-transporting ATP synthase activity, rotational mechanism"/>
    <property type="evidence" value="ECO:0007669"/>
    <property type="project" value="UniProtKB-UniRule"/>
</dbReference>
<dbReference type="GO" id="GO:0046961">
    <property type="term" value="F:proton-transporting ATPase activity, rotational mechanism"/>
    <property type="evidence" value="ECO:0007669"/>
    <property type="project" value="TreeGrafter"/>
</dbReference>
<dbReference type="CDD" id="cd06503">
    <property type="entry name" value="ATP-synt_Fo_b"/>
    <property type="match status" value="1"/>
</dbReference>
<dbReference type="HAMAP" id="MF_01398">
    <property type="entry name" value="ATP_synth_b_bprime"/>
    <property type="match status" value="1"/>
</dbReference>
<dbReference type="InterPro" id="IPR002146">
    <property type="entry name" value="ATP_synth_b/b'su_bac/chlpt"/>
</dbReference>
<dbReference type="InterPro" id="IPR050059">
    <property type="entry name" value="ATP_synthase_B_chain"/>
</dbReference>
<dbReference type="NCBIfam" id="NF006611">
    <property type="entry name" value="PRK09173.1"/>
    <property type="match status" value="1"/>
</dbReference>
<dbReference type="PANTHER" id="PTHR33445:SF1">
    <property type="entry name" value="ATP SYNTHASE SUBUNIT B"/>
    <property type="match status" value="1"/>
</dbReference>
<dbReference type="PANTHER" id="PTHR33445">
    <property type="entry name" value="ATP SYNTHASE SUBUNIT B', CHLOROPLASTIC"/>
    <property type="match status" value="1"/>
</dbReference>
<dbReference type="Pfam" id="PF00430">
    <property type="entry name" value="ATP-synt_B"/>
    <property type="match status" value="1"/>
</dbReference>
<accession>A1URU5</accession>
<evidence type="ECO:0000255" key="1">
    <source>
        <dbReference type="HAMAP-Rule" id="MF_01398"/>
    </source>
</evidence>
<protein>
    <recommendedName>
        <fullName evidence="1">ATP synthase subunit b 1</fullName>
    </recommendedName>
    <alternativeName>
        <fullName evidence="1">ATP synthase F(0) sector subunit b 1</fullName>
    </alternativeName>
    <alternativeName>
        <fullName evidence="1">ATPase subunit I 1</fullName>
    </alternativeName>
    <alternativeName>
        <fullName evidence="1">F-type ATPase subunit b 1</fullName>
        <shortName evidence="1">F-ATPase subunit b 1</shortName>
    </alternativeName>
</protein>
<reference key="1">
    <citation type="submission" date="2006-12" db="EMBL/GenBank/DDBJ databases">
        <authorList>
            <person name="Hendrix L."/>
            <person name="Mohamoud Y."/>
            <person name="Radune D."/>
            <person name="Shvartsbeyn A."/>
            <person name="Daugherty S."/>
            <person name="Dodson R."/>
            <person name="Durkin A.S."/>
            <person name="Harkins D."/>
            <person name="Huot H."/>
            <person name="Kothari S.P."/>
            <person name="Madupu R."/>
            <person name="Li J."/>
            <person name="Nelson W.C."/>
            <person name="Shrivastava S."/>
            <person name="Giglio M.G."/>
            <person name="Haft D."/>
            <person name="Selengut J."/>
            <person name="Fraser-Ligget C."/>
            <person name="Seshadri R."/>
        </authorList>
    </citation>
    <scope>NUCLEOTIDE SEQUENCE [LARGE SCALE GENOMIC DNA]</scope>
    <source>
        <strain>ATCC 35685 / KC583 / Herrer 020/F12,63</strain>
    </source>
</reference>
<keyword id="KW-0066">ATP synthesis</keyword>
<keyword id="KW-0997">Cell inner membrane</keyword>
<keyword id="KW-1003">Cell membrane</keyword>
<keyword id="KW-0138">CF(0)</keyword>
<keyword id="KW-0375">Hydrogen ion transport</keyword>
<keyword id="KW-0406">Ion transport</keyword>
<keyword id="KW-0472">Membrane</keyword>
<keyword id="KW-0812">Transmembrane</keyword>
<keyword id="KW-1133">Transmembrane helix</keyword>
<keyword id="KW-0813">Transport</keyword>